<name>VLP15_BORHE</name>
<feature type="signal peptide" evidence="3">
    <location>
        <begin position="1"/>
        <end position="18"/>
    </location>
</feature>
<feature type="chain" id="PRO_0000244505" description="Variable large protein 15/16">
    <location>
        <begin position="19"/>
        <end position="354"/>
    </location>
</feature>
<feature type="region of interest" description="Disordered" evidence="4">
    <location>
        <begin position="333"/>
        <end position="354"/>
    </location>
</feature>
<feature type="compositionally biased region" description="Polar residues" evidence="4">
    <location>
        <begin position="338"/>
        <end position="354"/>
    </location>
</feature>
<feature type="lipid moiety-binding region" description="N-palmitoyl cysteine" evidence="2 8">
    <location>
        <position position="19"/>
    </location>
</feature>
<feature type="lipid moiety-binding region" description="S-diacylglycerol cysteine" evidence="2 8">
    <location>
        <position position="19"/>
    </location>
</feature>
<evidence type="ECO:0000250" key="1">
    <source>
        <dbReference type="UniProtKB" id="P21875"/>
    </source>
</evidence>
<evidence type="ECO:0000255" key="2"/>
<evidence type="ECO:0000255" key="3">
    <source>
        <dbReference type="PROSITE-ProRule" id="PRU00303"/>
    </source>
</evidence>
<evidence type="ECO:0000256" key="4">
    <source>
        <dbReference type="SAM" id="MobiDB-lite"/>
    </source>
</evidence>
<evidence type="ECO:0000269" key="5">
    <source>
    </source>
</evidence>
<evidence type="ECO:0000303" key="6">
    <source>
    </source>
</evidence>
<evidence type="ECO:0000303" key="7">
    <source ref="1"/>
</evidence>
<evidence type="ECO:0000305" key="8"/>
<evidence type="ECO:0000305" key="9">
    <source>
    </source>
</evidence>
<evidence type="ECO:0000312" key="10">
    <source>
        <dbReference type="EMBL" id="AAB17735.1"/>
    </source>
</evidence>
<geneLocation type="plasmid" evidence="6"/>
<organism>
    <name type="scientific">Borrelia hermsii</name>
    <dbReference type="NCBI Taxonomy" id="140"/>
    <lineage>
        <taxon>Bacteria</taxon>
        <taxon>Pseudomonadati</taxon>
        <taxon>Spirochaetota</taxon>
        <taxon>Spirochaetia</taxon>
        <taxon>Spirochaetales</taxon>
        <taxon>Borreliaceae</taxon>
        <taxon>Borrelia</taxon>
    </lineage>
</organism>
<sequence>MRKRISAIIMTLFMVLVSCNSGGVAEDPKTVYLTSIANLGKGFLDVFVTFGDMVTGAFGIKADTKKSDIGKYFTDIEKTMTSVKKKLQDEVVKNGNYAKVKTVVAKFIEEVLDKIAAGAKEAAKGATGSDAIGNAVHNQDAVAADATSVNALVKGIGEIVEVVLKDGEGDAGATKTGDTEKKSIGKLFAKKDDDRAQEAEASAANASIGAVSGADILKAIAKSGEIADNNKNIEEAKDAASIAAAKQTDDKKEIKDEAAKKDAVIAAGIALRAMAKGGKFTAKQNEEKSANAVNGAAASAVGKTLSTLIIAIRNTVDSGLKTINEALATVKQEDKSVEATNTAEATTSGQQAKN</sequence>
<protein>
    <recommendedName>
        <fullName evidence="6">Variable large protein 15/16</fullName>
    </recommendedName>
</protein>
<reference evidence="10" key="1">
    <citation type="submission" date="1996-03" db="EMBL/GenBank/DDBJ databases">
        <authorList>
            <person name="Restrepo B.I."/>
            <person name="Carter C.J."/>
            <person name="Infante D."/>
            <person name="Barbour A.G."/>
        </authorList>
    </citation>
    <scope>NUCLEOTIDE SEQUENCE [GENOMIC DNA]</scope>
    <source>
        <strain>ATCC 35209 / HS1</strain>
    </source>
</reference>
<reference evidence="8" key="2">
    <citation type="journal article" date="1998" name="Infect. Immun.">
        <title>Population structure of the relapsing fever spirochete Borrelia hermsii as indicated by polymorphism of two multigene families that encode immunogenic outer surface lipoproteins.</title>
        <authorList>
            <person name="Hinnebusch B.J."/>
            <person name="Barbour A.G."/>
            <person name="Restrepo B.I."/>
            <person name="Schwan T.G."/>
        </authorList>
    </citation>
    <scope>NOMENCLATURE</scope>
</reference>
<proteinExistence type="inferred from homology"/>
<gene>
    <name evidence="6" type="primary">vlp15</name>
    <name evidence="7 10" type="synonym">vmp16</name>
</gene>
<comment type="function">
    <text evidence="1">The Vlp and Vsp proteins are antigenically distinct proteins, only one vlp or vsp gene is transcriptionally active at any one time. Switching between these genes is a mechanism of host immune response evasion.</text>
</comment>
<comment type="subcellular location">
    <subcellularLocation>
        <location evidence="1">Cell outer membrane</location>
        <topology>Lipid-anchor</topology>
    </subcellularLocation>
</comment>
<comment type="miscellaneous">
    <text evidence="9">Genes for both Vlp and Vsp families are on (usually) unnamed linear plasmids in B.hermsii HS1.</text>
</comment>
<comment type="similarity">
    <text evidence="5">Belongs to the variable large protein (Vlp) family. Delta subfamily.</text>
</comment>
<comment type="caution">
    <text evidence="8">Gene called vmp16 in DNA submission but vlp15 in nomenclature paper.</text>
</comment>
<dbReference type="EMBL" id="U52039">
    <property type="protein sequence ID" value="AAB17735.1"/>
    <property type="molecule type" value="Genomic_DNA"/>
</dbReference>
<dbReference type="SMR" id="P70902"/>
<dbReference type="GO" id="GO:0009279">
    <property type="term" value="C:cell outer membrane"/>
    <property type="evidence" value="ECO:0007669"/>
    <property type="project" value="UniProtKB-SubCell"/>
</dbReference>
<dbReference type="InterPro" id="IPR000680">
    <property type="entry name" value="Borrelia_lipo"/>
</dbReference>
<dbReference type="Pfam" id="PF00921">
    <property type="entry name" value="Lipoprotein_2"/>
    <property type="match status" value="1"/>
</dbReference>
<dbReference type="SUPFAM" id="SSF74748">
    <property type="entry name" value="Variable surface antigen VlsE"/>
    <property type="match status" value="1"/>
</dbReference>
<dbReference type="PROSITE" id="PS51257">
    <property type="entry name" value="PROKAR_LIPOPROTEIN"/>
    <property type="match status" value="1"/>
</dbReference>
<accession>P70902</accession>
<keyword id="KW-0998">Cell outer membrane</keyword>
<keyword id="KW-0449">Lipoprotein</keyword>
<keyword id="KW-0472">Membrane</keyword>
<keyword id="KW-0564">Palmitate</keyword>
<keyword id="KW-0614">Plasmid</keyword>
<keyword id="KW-0732">Signal</keyword>